<proteinExistence type="inferred from homology"/>
<organism>
    <name type="scientific">Brucella abortus (strain 2308)</name>
    <dbReference type="NCBI Taxonomy" id="359391"/>
    <lineage>
        <taxon>Bacteria</taxon>
        <taxon>Pseudomonadati</taxon>
        <taxon>Pseudomonadota</taxon>
        <taxon>Alphaproteobacteria</taxon>
        <taxon>Hyphomicrobiales</taxon>
        <taxon>Brucellaceae</taxon>
        <taxon>Brucella/Ochrobactrum group</taxon>
        <taxon>Brucella</taxon>
    </lineage>
</organism>
<sequence>MYDSIMSVSARNALSRLSETVAEKGVGSASAPQAVPAAPGASFGEVLSQMTGSVSQKLQAAEATSIQGIKGDAPVRDVVSSVMEAEQSLQTAIAIRDKIVQAYLEISRMPI</sequence>
<protein>
    <recommendedName>
        <fullName evidence="1">Flagellar hook-basal body complex protein FliE</fullName>
    </recommendedName>
</protein>
<comment type="subcellular location">
    <subcellularLocation>
        <location evidence="1">Bacterial flagellum basal body</location>
    </subcellularLocation>
</comment>
<comment type="similarity">
    <text evidence="1">Belongs to the FliE family.</text>
</comment>
<feature type="chain" id="PRO_1000045843" description="Flagellar hook-basal body complex protein FliE">
    <location>
        <begin position="1"/>
        <end position="111"/>
    </location>
</feature>
<keyword id="KW-0975">Bacterial flagellum</keyword>
<keyword id="KW-1185">Reference proteome</keyword>
<gene>
    <name evidence="1" type="primary">fliE</name>
    <name type="ordered locus">BAB2_0150</name>
</gene>
<name>FLIE_BRUA2</name>
<dbReference type="EMBL" id="AM040265">
    <property type="protein sequence ID" value="CAJ12316.1"/>
    <property type="molecule type" value="Genomic_DNA"/>
</dbReference>
<dbReference type="RefSeq" id="WP_002966429.1">
    <property type="nucleotide sequence ID" value="NZ_KN046823.1"/>
</dbReference>
<dbReference type="SMR" id="Q2YJ71"/>
<dbReference type="STRING" id="359391.BAB2_0150"/>
<dbReference type="KEGG" id="bmf:BAB2_0150"/>
<dbReference type="PATRIC" id="fig|359391.11.peg.2097"/>
<dbReference type="HOGENOM" id="CLU_147249_2_0_5"/>
<dbReference type="PhylomeDB" id="Q2YJ71"/>
<dbReference type="Proteomes" id="UP000002719">
    <property type="component" value="Chromosome II"/>
</dbReference>
<dbReference type="GO" id="GO:0009425">
    <property type="term" value="C:bacterial-type flagellum basal body"/>
    <property type="evidence" value="ECO:0007669"/>
    <property type="project" value="UniProtKB-SubCell"/>
</dbReference>
<dbReference type="GO" id="GO:0003774">
    <property type="term" value="F:cytoskeletal motor activity"/>
    <property type="evidence" value="ECO:0007669"/>
    <property type="project" value="InterPro"/>
</dbReference>
<dbReference type="GO" id="GO:0005198">
    <property type="term" value="F:structural molecule activity"/>
    <property type="evidence" value="ECO:0007669"/>
    <property type="project" value="InterPro"/>
</dbReference>
<dbReference type="GO" id="GO:0071973">
    <property type="term" value="P:bacterial-type flagellum-dependent cell motility"/>
    <property type="evidence" value="ECO:0007669"/>
    <property type="project" value="InterPro"/>
</dbReference>
<dbReference type="HAMAP" id="MF_00724">
    <property type="entry name" value="FliE"/>
    <property type="match status" value="1"/>
</dbReference>
<dbReference type="InterPro" id="IPR001624">
    <property type="entry name" value="FliE"/>
</dbReference>
<dbReference type="PANTHER" id="PTHR34653">
    <property type="match status" value="1"/>
</dbReference>
<dbReference type="PANTHER" id="PTHR34653:SF1">
    <property type="entry name" value="FLAGELLAR HOOK-BASAL BODY COMPLEX PROTEIN FLIE"/>
    <property type="match status" value="1"/>
</dbReference>
<dbReference type="Pfam" id="PF02049">
    <property type="entry name" value="FliE"/>
    <property type="match status" value="1"/>
</dbReference>
<dbReference type="PRINTS" id="PR01006">
    <property type="entry name" value="FLGHOOKFLIE"/>
</dbReference>
<reference key="1">
    <citation type="journal article" date="2005" name="Infect. Immun.">
        <title>Whole-genome analyses of speciation events in pathogenic Brucellae.</title>
        <authorList>
            <person name="Chain P.S."/>
            <person name="Comerci D.J."/>
            <person name="Tolmasky M.E."/>
            <person name="Larimer F.W."/>
            <person name="Malfatti S.A."/>
            <person name="Vergez L.M."/>
            <person name="Aguero F."/>
            <person name="Land M.L."/>
            <person name="Ugalde R.A."/>
            <person name="Garcia E."/>
        </authorList>
    </citation>
    <scope>NUCLEOTIDE SEQUENCE [LARGE SCALE GENOMIC DNA]</scope>
    <source>
        <strain>2308</strain>
    </source>
</reference>
<accession>Q2YJ71</accession>
<evidence type="ECO:0000255" key="1">
    <source>
        <dbReference type="HAMAP-Rule" id="MF_00724"/>
    </source>
</evidence>